<dbReference type="EC" id="6.3.4.4" evidence="2"/>
<dbReference type="EMBL" id="CM000607">
    <property type="protein sequence ID" value="EEC50011.1"/>
    <property type="molecule type" value="Genomic_DNA"/>
</dbReference>
<dbReference type="RefSeq" id="XP_002178346.1">
    <property type="nucleotide sequence ID" value="XM_002178310.1"/>
</dbReference>
<dbReference type="SMR" id="B7FUM7"/>
<dbReference type="FunCoup" id="B7FUM7">
    <property type="interactions" value="309"/>
</dbReference>
<dbReference type="STRING" id="556484.B7FUM7"/>
<dbReference type="PaxDb" id="2850-Phatr26256"/>
<dbReference type="GeneID" id="7197615"/>
<dbReference type="KEGG" id="pti:PHATRDRAFT_26256"/>
<dbReference type="eggNOG" id="KOG1355">
    <property type="taxonomic scope" value="Eukaryota"/>
</dbReference>
<dbReference type="HOGENOM" id="CLU_029848_3_1_1"/>
<dbReference type="InParanoid" id="B7FUM7"/>
<dbReference type="OrthoDB" id="10265645at2759"/>
<dbReference type="UniPathway" id="UPA00075">
    <property type="reaction ID" value="UER00335"/>
</dbReference>
<dbReference type="Proteomes" id="UP000000759">
    <property type="component" value="Chromosome 4"/>
</dbReference>
<dbReference type="GO" id="GO:0005737">
    <property type="term" value="C:cytoplasm"/>
    <property type="evidence" value="ECO:0007669"/>
    <property type="project" value="UniProtKB-SubCell"/>
</dbReference>
<dbReference type="GO" id="GO:0004019">
    <property type="term" value="F:adenylosuccinate synthase activity"/>
    <property type="evidence" value="ECO:0007669"/>
    <property type="project" value="UniProtKB-UniRule"/>
</dbReference>
<dbReference type="GO" id="GO:0005525">
    <property type="term" value="F:GTP binding"/>
    <property type="evidence" value="ECO:0007669"/>
    <property type="project" value="UniProtKB-UniRule"/>
</dbReference>
<dbReference type="GO" id="GO:0000287">
    <property type="term" value="F:magnesium ion binding"/>
    <property type="evidence" value="ECO:0007669"/>
    <property type="project" value="UniProtKB-UniRule"/>
</dbReference>
<dbReference type="GO" id="GO:0044208">
    <property type="term" value="P:'de novo' AMP biosynthetic process"/>
    <property type="evidence" value="ECO:0007669"/>
    <property type="project" value="UniProtKB-UniRule"/>
</dbReference>
<dbReference type="GO" id="GO:0046040">
    <property type="term" value="P:IMP metabolic process"/>
    <property type="evidence" value="ECO:0007669"/>
    <property type="project" value="TreeGrafter"/>
</dbReference>
<dbReference type="CDD" id="cd03108">
    <property type="entry name" value="AdSS"/>
    <property type="match status" value="1"/>
</dbReference>
<dbReference type="FunFam" id="3.90.170.10:FF:000001">
    <property type="entry name" value="Adenylosuccinate synthetase"/>
    <property type="match status" value="1"/>
</dbReference>
<dbReference type="FunFam" id="1.10.300.10:FF:000002">
    <property type="entry name" value="Adenylosuccinate synthetase, chloroplastic"/>
    <property type="match status" value="1"/>
</dbReference>
<dbReference type="Gene3D" id="3.40.440.10">
    <property type="entry name" value="Adenylosuccinate Synthetase, subunit A, domain 1"/>
    <property type="match status" value="1"/>
</dbReference>
<dbReference type="Gene3D" id="1.10.300.10">
    <property type="entry name" value="Adenylosuccinate Synthetase, subunit A, domain 2"/>
    <property type="match status" value="1"/>
</dbReference>
<dbReference type="Gene3D" id="3.90.170.10">
    <property type="entry name" value="Adenylosuccinate Synthetase, subunit A, domain 3"/>
    <property type="match status" value="1"/>
</dbReference>
<dbReference type="HAMAP" id="MF_00011">
    <property type="entry name" value="Adenylosucc_synth"/>
    <property type="match status" value="1"/>
</dbReference>
<dbReference type="InterPro" id="IPR018220">
    <property type="entry name" value="Adenylosuccin_syn_GTP-bd"/>
</dbReference>
<dbReference type="InterPro" id="IPR033128">
    <property type="entry name" value="Adenylosuccin_syn_Lys_AS"/>
</dbReference>
<dbReference type="InterPro" id="IPR042109">
    <property type="entry name" value="Adenylosuccinate_synth_dom1"/>
</dbReference>
<dbReference type="InterPro" id="IPR042110">
    <property type="entry name" value="Adenylosuccinate_synth_dom2"/>
</dbReference>
<dbReference type="InterPro" id="IPR042111">
    <property type="entry name" value="Adenylosuccinate_synth_dom3"/>
</dbReference>
<dbReference type="InterPro" id="IPR001114">
    <property type="entry name" value="Adenylosuccinate_synthetase"/>
</dbReference>
<dbReference type="InterPro" id="IPR027417">
    <property type="entry name" value="P-loop_NTPase"/>
</dbReference>
<dbReference type="NCBIfam" id="NF002223">
    <property type="entry name" value="PRK01117.1"/>
    <property type="match status" value="1"/>
</dbReference>
<dbReference type="NCBIfam" id="TIGR00184">
    <property type="entry name" value="purA"/>
    <property type="match status" value="1"/>
</dbReference>
<dbReference type="PANTHER" id="PTHR11846">
    <property type="entry name" value="ADENYLOSUCCINATE SYNTHETASE"/>
    <property type="match status" value="1"/>
</dbReference>
<dbReference type="PANTHER" id="PTHR11846:SF0">
    <property type="entry name" value="ADENYLOSUCCINATE SYNTHETASE"/>
    <property type="match status" value="1"/>
</dbReference>
<dbReference type="Pfam" id="PF00709">
    <property type="entry name" value="Adenylsucc_synt"/>
    <property type="match status" value="1"/>
</dbReference>
<dbReference type="SMART" id="SM00788">
    <property type="entry name" value="Adenylsucc_synt"/>
    <property type="match status" value="1"/>
</dbReference>
<dbReference type="SUPFAM" id="SSF52540">
    <property type="entry name" value="P-loop containing nucleoside triphosphate hydrolases"/>
    <property type="match status" value="1"/>
</dbReference>
<dbReference type="PROSITE" id="PS01266">
    <property type="entry name" value="ADENYLOSUCCIN_SYN_1"/>
    <property type="match status" value="1"/>
</dbReference>
<dbReference type="PROSITE" id="PS00513">
    <property type="entry name" value="ADENYLOSUCCIN_SYN_2"/>
    <property type="match status" value="1"/>
</dbReference>
<reference key="1">
    <citation type="journal article" date="2008" name="Nature">
        <title>The Phaeodactylum genome reveals the evolutionary history of diatom genomes.</title>
        <authorList>
            <person name="Bowler C."/>
            <person name="Allen A.E."/>
            <person name="Badger J.H."/>
            <person name="Grimwood J."/>
            <person name="Jabbari K."/>
            <person name="Kuo A."/>
            <person name="Maheswari U."/>
            <person name="Martens C."/>
            <person name="Maumus F."/>
            <person name="Otillar R.P."/>
            <person name="Rayko E."/>
            <person name="Salamov A."/>
            <person name="Vandepoele K."/>
            <person name="Beszteri B."/>
            <person name="Gruber A."/>
            <person name="Heijde M."/>
            <person name="Katinka M."/>
            <person name="Mock T."/>
            <person name="Valentin K."/>
            <person name="Verret F."/>
            <person name="Berges J.A."/>
            <person name="Brownlee C."/>
            <person name="Cadoret J.P."/>
            <person name="Chiovitti A."/>
            <person name="Choi C.J."/>
            <person name="Coesel S."/>
            <person name="De Martino A."/>
            <person name="Detter J.C."/>
            <person name="Durkin C."/>
            <person name="Falciatore A."/>
            <person name="Fournet J."/>
            <person name="Haruta M."/>
            <person name="Huysman M.J."/>
            <person name="Jenkins B.D."/>
            <person name="Jiroutova K."/>
            <person name="Jorgensen R.E."/>
            <person name="Joubert Y."/>
            <person name="Kaplan A."/>
            <person name="Kroger N."/>
            <person name="Kroth P.G."/>
            <person name="La Roche J."/>
            <person name="Lindquist E."/>
            <person name="Lommer M."/>
            <person name="Martin-Jezequel V."/>
            <person name="Lopez P.J."/>
            <person name="Lucas S."/>
            <person name="Mangogna M."/>
            <person name="McGinnis K."/>
            <person name="Medlin L.K."/>
            <person name="Montsant A."/>
            <person name="Oudot-Le Secq M.P."/>
            <person name="Napoli C."/>
            <person name="Obornik M."/>
            <person name="Parker M.S."/>
            <person name="Petit J.L."/>
            <person name="Porcel B.M."/>
            <person name="Poulsen N."/>
            <person name="Robison M."/>
            <person name="Rychlewski L."/>
            <person name="Rynearson T.A."/>
            <person name="Schmutz J."/>
            <person name="Shapiro H."/>
            <person name="Siaut M."/>
            <person name="Stanley M."/>
            <person name="Sussman M.R."/>
            <person name="Taylor A.R."/>
            <person name="Vardi A."/>
            <person name="von Dassow P."/>
            <person name="Vyverman W."/>
            <person name="Willis A."/>
            <person name="Wyrwicz L.S."/>
            <person name="Rokhsar D.S."/>
            <person name="Weissenbach J."/>
            <person name="Armbrust E.V."/>
            <person name="Green B.R."/>
            <person name="Van de Peer Y."/>
            <person name="Grigoriev I.V."/>
        </authorList>
    </citation>
    <scope>NUCLEOTIDE SEQUENCE [LARGE SCALE GENOMIC DNA]</scope>
    <source>
        <strain>CCAP 1055/1</strain>
    </source>
</reference>
<reference key="2">
    <citation type="submission" date="2008-08" db="EMBL/GenBank/DDBJ databases">
        <authorList>
            <consortium name="Diatom Consortium"/>
            <person name="Grigoriev I."/>
            <person name="Grimwood J."/>
            <person name="Kuo A."/>
            <person name="Otillar R.P."/>
            <person name="Salamov A."/>
            <person name="Detter J.C."/>
            <person name="Lindquist E."/>
            <person name="Shapiro H."/>
            <person name="Lucas S."/>
            <person name="Glavina del Rio T."/>
            <person name="Pitluck S."/>
            <person name="Rokhsar D."/>
            <person name="Bowler C."/>
        </authorList>
    </citation>
    <scope>GENOME REANNOTATION</scope>
    <source>
        <strain>CCAP 1055/1</strain>
    </source>
</reference>
<organism>
    <name type="scientific">Phaeodactylum tricornutum (strain CCAP 1055/1)</name>
    <dbReference type="NCBI Taxonomy" id="556484"/>
    <lineage>
        <taxon>Eukaryota</taxon>
        <taxon>Sar</taxon>
        <taxon>Stramenopiles</taxon>
        <taxon>Ochrophyta</taxon>
        <taxon>Bacillariophyta</taxon>
        <taxon>Bacillariophyceae</taxon>
        <taxon>Bacillariophycidae</taxon>
        <taxon>Naviculales</taxon>
        <taxon>Phaeodactylaceae</taxon>
        <taxon>Phaeodactylum</taxon>
    </lineage>
</organism>
<gene>
    <name type="ORF">PHATRDRAFT_26256</name>
</gene>
<accession>B7FUM7</accession>
<name>PURA_PHATC</name>
<keyword id="KW-0963">Cytoplasm</keyword>
<keyword id="KW-0342">GTP-binding</keyword>
<keyword id="KW-0436">Ligase</keyword>
<keyword id="KW-0460">Magnesium</keyword>
<keyword id="KW-0479">Metal-binding</keyword>
<keyword id="KW-0547">Nucleotide-binding</keyword>
<keyword id="KW-0658">Purine biosynthesis</keyword>
<keyword id="KW-1185">Reference proteome</keyword>
<proteinExistence type="inferred from homology"/>
<protein>
    <recommendedName>
        <fullName evidence="2">Adenylosuccinate synthetase</fullName>
        <shortName evidence="2">AMPSase</shortName>
        <shortName evidence="2">AdSS</shortName>
        <ecNumber evidence="2">6.3.4.4</ecNumber>
    </recommendedName>
    <alternativeName>
        <fullName evidence="2">IMP--aspartate ligase</fullName>
    </alternativeName>
</protein>
<feature type="chain" id="PRO_0000399309" description="Adenylosuccinate synthetase">
    <location>
        <begin position="1"/>
        <end position="526"/>
    </location>
</feature>
<feature type="active site" description="Proton acceptor" evidence="2">
    <location>
        <position position="103"/>
    </location>
</feature>
<feature type="active site" description="Proton donor" evidence="2">
    <location>
        <position position="131"/>
    </location>
</feature>
<feature type="binding site" evidence="2">
    <location>
        <begin position="102"/>
        <end position="108"/>
    </location>
    <ligand>
        <name>GTP</name>
        <dbReference type="ChEBI" id="CHEBI:37565"/>
    </ligand>
</feature>
<feature type="binding site" description="in other chain" evidence="2">
    <location>
        <begin position="103"/>
        <end position="106"/>
    </location>
    <ligand>
        <name>IMP</name>
        <dbReference type="ChEBI" id="CHEBI:58053"/>
        <note>ligand shared between dimeric partners</note>
    </ligand>
</feature>
<feature type="binding site" evidence="2">
    <location>
        <position position="103"/>
    </location>
    <ligand>
        <name>Mg(2+)</name>
        <dbReference type="ChEBI" id="CHEBI:18420"/>
    </ligand>
</feature>
<feature type="binding site" description="in other chain" evidence="2">
    <location>
        <begin position="128"/>
        <end position="131"/>
    </location>
    <ligand>
        <name>IMP</name>
        <dbReference type="ChEBI" id="CHEBI:58053"/>
        <note>ligand shared between dimeric partners</note>
    </ligand>
</feature>
<feature type="binding site" evidence="2">
    <location>
        <begin position="130"/>
        <end position="132"/>
    </location>
    <ligand>
        <name>GTP</name>
        <dbReference type="ChEBI" id="CHEBI:37565"/>
    </ligand>
</feature>
<feature type="binding site" evidence="2">
    <location>
        <position position="130"/>
    </location>
    <ligand>
        <name>Mg(2+)</name>
        <dbReference type="ChEBI" id="CHEBI:18420"/>
    </ligand>
</feature>
<feature type="binding site" description="in other chain" evidence="2">
    <location>
        <position position="219"/>
    </location>
    <ligand>
        <name>IMP</name>
        <dbReference type="ChEBI" id="CHEBI:58053"/>
        <note>ligand shared between dimeric partners</note>
    </ligand>
</feature>
<feature type="binding site" evidence="2">
    <location>
        <position position="233"/>
    </location>
    <ligand>
        <name>IMP</name>
        <dbReference type="ChEBI" id="CHEBI:58053"/>
        <note>ligand shared between dimeric partners</note>
    </ligand>
</feature>
<feature type="binding site" description="in other chain" evidence="2">
    <location>
        <position position="310"/>
    </location>
    <ligand>
        <name>IMP</name>
        <dbReference type="ChEBI" id="CHEBI:58053"/>
        <note>ligand shared between dimeric partners</note>
    </ligand>
</feature>
<feature type="binding site" description="in other chain" evidence="2">
    <location>
        <position position="325"/>
    </location>
    <ligand>
        <name>IMP</name>
        <dbReference type="ChEBI" id="CHEBI:58053"/>
        <note>ligand shared between dimeric partners</note>
    </ligand>
</feature>
<feature type="binding site" evidence="2">
    <location>
        <begin position="388"/>
        <end position="394"/>
    </location>
    <ligand>
        <name>substrate</name>
    </ligand>
</feature>
<feature type="binding site" description="in other chain" evidence="2">
    <location>
        <position position="392"/>
    </location>
    <ligand>
        <name>IMP</name>
        <dbReference type="ChEBI" id="CHEBI:58053"/>
        <note>ligand shared between dimeric partners</note>
    </ligand>
</feature>
<feature type="binding site" evidence="2">
    <location>
        <position position="394"/>
    </location>
    <ligand>
        <name>GTP</name>
        <dbReference type="ChEBI" id="CHEBI:37565"/>
    </ligand>
</feature>
<feature type="binding site" evidence="2">
    <location>
        <begin position="420"/>
        <end position="422"/>
    </location>
    <ligand>
        <name>GTP</name>
        <dbReference type="ChEBI" id="CHEBI:37565"/>
    </ligand>
</feature>
<feature type="binding site" evidence="2">
    <location>
        <begin position="502"/>
        <end position="504"/>
    </location>
    <ligand>
        <name>GTP</name>
        <dbReference type="ChEBI" id="CHEBI:37565"/>
    </ligand>
</feature>
<sequence length="526" mass="57143">MFRHAFSKSSPAFLAGGSAIGGAIAGLMWSGERNTSSSTACDSSEPSNQSVIGLLQELSRKVNNLESLVGGNPGSFPARSTSSVTKSGTQYGIDIVLGAQWGDEGKGKLVDLLSQDYDVCARVAGGSNAGHTIVVQGKKYKFHLLPSGVLNPNATCVIGNGVVIHIPSFLNELDSLEASGVDYQGRVYISDRAHLVFDFHQEVDGRQEDRLGRHKIGTTKKGIGPAYSSKINRNGLRVGDLQNWDHFERRFRELCTHHERSYEGLKIDVDNQLAFYKTVAERVNSMTIDTIDYTNKQFEAGKRILVEGANATMLDIDFGTYPYVTSSNPSVGSVLTGLGVSPGKLRGIYGTVKAYCTRVGEGPFPTELPLDEGTPGEHLSQVGAEYGTTTGRTRRCGWLDIPQMKYSALINGFTSINLTKVDVFTGMPEVKIGKAYLHNGKYLSSMPASLDVLSNVGVEYEVLPGWSEDISNCKKFEELPENCQKYILRVQELLGIPIRWIGVGPNRADVIDRGEGWDLATAGTNQ</sequence>
<evidence type="ECO:0000250" key="1"/>
<evidence type="ECO:0000255" key="2">
    <source>
        <dbReference type="HAMAP-Rule" id="MF_03125"/>
    </source>
</evidence>
<comment type="function">
    <text evidence="1">Plays an important role in the de novo pathway and in the salvage pathway of purine nucleotide biosynthesis. Catalyzes the first committed step in the biosynthesis of AMP from IMP (By similarity).</text>
</comment>
<comment type="catalytic activity">
    <reaction evidence="2">
        <text>IMP + L-aspartate + GTP = N(6)-(1,2-dicarboxyethyl)-AMP + GDP + phosphate + 2 H(+)</text>
        <dbReference type="Rhea" id="RHEA:15753"/>
        <dbReference type="ChEBI" id="CHEBI:15378"/>
        <dbReference type="ChEBI" id="CHEBI:29991"/>
        <dbReference type="ChEBI" id="CHEBI:37565"/>
        <dbReference type="ChEBI" id="CHEBI:43474"/>
        <dbReference type="ChEBI" id="CHEBI:57567"/>
        <dbReference type="ChEBI" id="CHEBI:58053"/>
        <dbReference type="ChEBI" id="CHEBI:58189"/>
        <dbReference type="EC" id="6.3.4.4"/>
    </reaction>
</comment>
<comment type="cofactor">
    <cofactor evidence="2">
        <name>Mg(2+)</name>
        <dbReference type="ChEBI" id="CHEBI:18420"/>
    </cofactor>
    <text evidence="2">Binds 1 Mg(2+) ion per subunit.</text>
</comment>
<comment type="pathway">
    <text evidence="2">Purine metabolism; AMP biosynthesis via de novo pathway; AMP from IMP: step 1/2.</text>
</comment>
<comment type="subunit">
    <text evidence="2">Homodimer.</text>
</comment>
<comment type="subcellular location">
    <subcellularLocation>
        <location evidence="2">Cytoplasm</location>
    </subcellularLocation>
</comment>
<comment type="similarity">
    <text evidence="2">Belongs to the adenylosuccinate synthetase family.</text>
</comment>